<proteinExistence type="inferred from homology"/>
<protein>
    <recommendedName>
        <fullName evidence="1">DNA integrity scanning protein DisA</fullName>
    </recommendedName>
    <alternativeName>
        <fullName evidence="1">Cyclic di-AMP synthase</fullName>
        <shortName evidence="1">c-di-AMP synthase</shortName>
    </alternativeName>
    <alternativeName>
        <fullName evidence="1">Diadenylate cyclase</fullName>
        <ecNumber evidence="1">2.7.7.85</ecNumber>
    </alternativeName>
</protein>
<keyword id="KW-0067">ATP-binding</keyword>
<keyword id="KW-0227">DNA damage</keyword>
<keyword id="KW-0234">DNA repair</keyword>
<keyword id="KW-0238">DNA-binding</keyword>
<keyword id="KW-0460">Magnesium</keyword>
<keyword id="KW-0547">Nucleotide-binding</keyword>
<keyword id="KW-0548">Nucleotidyltransferase</keyword>
<keyword id="KW-1185">Reference proteome</keyword>
<keyword id="KW-0808">Transferase</keyword>
<feature type="chain" id="PRO_1000087446" description="DNA integrity scanning protein DisA">
    <location>
        <begin position="1"/>
        <end position="354"/>
    </location>
</feature>
<feature type="domain" description="DAC" evidence="2">
    <location>
        <begin position="6"/>
        <end position="144"/>
    </location>
</feature>
<feature type="binding site" evidence="1">
    <location>
        <position position="73"/>
    </location>
    <ligand>
        <name>ATP</name>
        <dbReference type="ChEBI" id="CHEBI:30616"/>
    </ligand>
</feature>
<feature type="binding site" evidence="1">
    <location>
        <position position="91"/>
    </location>
    <ligand>
        <name>ATP</name>
        <dbReference type="ChEBI" id="CHEBI:30616"/>
    </ligand>
</feature>
<feature type="binding site" evidence="1">
    <location>
        <begin position="104"/>
        <end position="108"/>
    </location>
    <ligand>
        <name>ATP</name>
        <dbReference type="ChEBI" id="CHEBI:30616"/>
    </ligand>
</feature>
<evidence type="ECO:0000255" key="1">
    <source>
        <dbReference type="HAMAP-Rule" id="MF_01438"/>
    </source>
</evidence>
<evidence type="ECO:0000255" key="2">
    <source>
        <dbReference type="PROSITE-ProRule" id="PRU01130"/>
    </source>
</evidence>
<sequence>MRLEKEKELKSILKLLAPGTQLREGLENILRAKTGGLIVLGDSEQILKVVDGGFAINSEYSPSYIYELAKMDGAIILSSDLKKILYANTQLIPDSTIPTFETGTRHRTADRVAKQTGVIVIAISQRRNVITVYRGHIKYVLRDSSVMLGRANQALQTLEKYVAVLDRVVNNLNILEFQDIVTLFDVMTAIQRTEMVMRIVSEIEIYICELGNEGRLISMQLNELIKSVERDGIFMIRDYCQTDMDYDEIYRQIQEISSDDVLNLDFISRAMGYVGVPLVDTLISPRGYRMLSKIPRIPATVMDNLVKNFKELKEIMEASYEDLDRVEGIGEARARAIKNGLRRLREQIMIDNKF</sequence>
<organism>
    <name type="scientific">Clostridium kluyveri (strain ATCC 8527 / DSM 555 / NBRC 12016 / NCIMB 10680 / K1)</name>
    <dbReference type="NCBI Taxonomy" id="431943"/>
    <lineage>
        <taxon>Bacteria</taxon>
        <taxon>Bacillati</taxon>
        <taxon>Bacillota</taxon>
        <taxon>Clostridia</taxon>
        <taxon>Eubacteriales</taxon>
        <taxon>Clostridiaceae</taxon>
        <taxon>Clostridium</taxon>
    </lineage>
</organism>
<dbReference type="EC" id="2.7.7.85" evidence="1"/>
<dbReference type="EMBL" id="CP000673">
    <property type="protein sequence ID" value="EDK32253.1"/>
    <property type="molecule type" value="Genomic_DNA"/>
</dbReference>
<dbReference type="RefSeq" id="WP_011988779.1">
    <property type="nucleotide sequence ID" value="NC_009706.1"/>
</dbReference>
<dbReference type="SMR" id="A5N4M2"/>
<dbReference type="STRING" id="431943.CKL_0197"/>
<dbReference type="KEGG" id="ckl:CKL_0197"/>
<dbReference type="eggNOG" id="COG1623">
    <property type="taxonomic scope" value="Bacteria"/>
</dbReference>
<dbReference type="HOGENOM" id="CLU_787128_0_0_9"/>
<dbReference type="Proteomes" id="UP000002411">
    <property type="component" value="Chromosome"/>
</dbReference>
<dbReference type="GO" id="GO:0004016">
    <property type="term" value="F:adenylate cyclase activity"/>
    <property type="evidence" value="ECO:0007669"/>
    <property type="project" value="TreeGrafter"/>
</dbReference>
<dbReference type="GO" id="GO:0005524">
    <property type="term" value="F:ATP binding"/>
    <property type="evidence" value="ECO:0007669"/>
    <property type="project" value="UniProtKB-UniRule"/>
</dbReference>
<dbReference type="GO" id="GO:0106408">
    <property type="term" value="F:diadenylate cyclase activity"/>
    <property type="evidence" value="ECO:0007669"/>
    <property type="project" value="UniProtKB-EC"/>
</dbReference>
<dbReference type="GO" id="GO:0003677">
    <property type="term" value="F:DNA binding"/>
    <property type="evidence" value="ECO:0007669"/>
    <property type="project" value="UniProtKB-UniRule"/>
</dbReference>
<dbReference type="GO" id="GO:0006281">
    <property type="term" value="P:DNA repair"/>
    <property type="evidence" value="ECO:0007669"/>
    <property type="project" value="UniProtKB-UniRule"/>
</dbReference>
<dbReference type="FunFam" id="3.40.1700.10:FF:000001">
    <property type="entry name" value="DNA integrity scanning protein DisA"/>
    <property type="match status" value="1"/>
</dbReference>
<dbReference type="Gene3D" id="1.10.150.20">
    <property type="entry name" value="5' to 3' exonuclease, C-terminal subdomain"/>
    <property type="match status" value="1"/>
</dbReference>
<dbReference type="Gene3D" id="1.20.1260.110">
    <property type="entry name" value="DNA integrity scanning linker region"/>
    <property type="match status" value="1"/>
</dbReference>
<dbReference type="Gene3D" id="3.40.1700.10">
    <property type="entry name" value="DNA integrity scanning protein, DisA, N-terminal domain"/>
    <property type="match status" value="1"/>
</dbReference>
<dbReference type="HAMAP" id="MF_01438">
    <property type="entry name" value="DisA"/>
    <property type="match status" value="1"/>
</dbReference>
<dbReference type="InterPro" id="IPR050338">
    <property type="entry name" value="DisA"/>
</dbReference>
<dbReference type="InterPro" id="IPR041663">
    <property type="entry name" value="DisA/LigA_HHH"/>
</dbReference>
<dbReference type="InterPro" id="IPR038331">
    <property type="entry name" value="DisA_sf"/>
</dbReference>
<dbReference type="InterPro" id="IPR036888">
    <property type="entry name" value="DNA_integrity_DisA_N_sf"/>
</dbReference>
<dbReference type="InterPro" id="IPR018906">
    <property type="entry name" value="DNA_integrity_scan_DisA_link"/>
</dbReference>
<dbReference type="InterPro" id="IPR003390">
    <property type="entry name" value="DNA_integrity_scan_DisA_N"/>
</dbReference>
<dbReference type="InterPro" id="IPR023763">
    <property type="entry name" value="DNA_integrity_scanning_protein"/>
</dbReference>
<dbReference type="InterPro" id="IPR010994">
    <property type="entry name" value="RuvA_2-like"/>
</dbReference>
<dbReference type="NCBIfam" id="NF010009">
    <property type="entry name" value="PRK13482.1"/>
    <property type="match status" value="1"/>
</dbReference>
<dbReference type="PANTHER" id="PTHR34185">
    <property type="entry name" value="DIADENYLATE CYCLASE"/>
    <property type="match status" value="1"/>
</dbReference>
<dbReference type="PANTHER" id="PTHR34185:SF3">
    <property type="entry name" value="DNA INTEGRITY SCANNING PROTEIN DISA"/>
    <property type="match status" value="1"/>
</dbReference>
<dbReference type="Pfam" id="PF02457">
    <property type="entry name" value="DAC"/>
    <property type="match status" value="1"/>
</dbReference>
<dbReference type="Pfam" id="PF10635">
    <property type="entry name" value="DisA-linker"/>
    <property type="match status" value="1"/>
</dbReference>
<dbReference type="Pfam" id="PF12826">
    <property type="entry name" value="HHH_2"/>
    <property type="match status" value="1"/>
</dbReference>
<dbReference type="SUPFAM" id="SSF47781">
    <property type="entry name" value="RuvA domain 2-like"/>
    <property type="match status" value="1"/>
</dbReference>
<dbReference type="SUPFAM" id="SSF143597">
    <property type="entry name" value="YojJ-like"/>
    <property type="match status" value="1"/>
</dbReference>
<dbReference type="PROSITE" id="PS51794">
    <property type="entry name" value="DAC"/>
    <property type="match status" value="1"/>
</dbReference>
<reference key="1">
    <citation type="journal article" date="2008" name="Proc. Natl. Acad. Sci. U.S.A.">
        <title>The genome of Clostridium kluyveri, a strict anaerobe with unique metabolic features.</title>
        <authorList>
            <person name="Seedorf H."/>
            <person name="Fricke W.F."/>
            <person name="Veith B."/>
            <person name="Brueggemann H."/>
            <person name="Liesegang H."/>
            <person name="Strittmatter A."/>
            <person name="Miethke M."/>
            <person name="Buckel W."/>
            <person name="Hinderberger J."/>
            <person name="Li F."/>
            <person name="Hagemeier C."/>
            <person name="Thauer R.K."/>
            <person name="Gottschalk G."/>
        </authorList>
    </citation>
    <scope>NUCLEOTIDE SEQUENCE [LARGE SCALE GENOMIC DNA]</scope>
    <source>
        <strain>ATCC 8527 / DSM 555 / NBRC 12016 / NCIMB 10680 / K1</strain>
    </source>
</reference>
<accession>A5N4M2</accession>
<comment type="function">
    <text evidence="1">Participates in a DNA-damage check-point that is active prior to asymmetric division when DNA is damaged. DisA forms globular foci that rapidly scan along the chromosomes during sporulation, searching for lesions. When a lesion is present, DisA pauses at the lesion site. This triggers a cellular response that culminates in a temporary block in sporulation initiation.</text>
</comment>
<comment type="function">
    <text evidence="1">Also has diadenylate cyclase activity, catalyzing the condensation of 2 ATP molecules into cyclic di-AMP (c-di-AMP). c-di-AMP acts as a signaling molecule that couples DNA integrity with progression of sporulation. The rise in c-di-AMP level generated by DisA while scanning the chromosome, operates as a positive signal that advances sporulation; upon encountering a lesion, the DisA focus arrests at the damaged site and halts c-di-AMP synthesis.</text>
</comment>
<comment type="catalytic activity">
    <reaction evidence="1">
        <text>2 ATP = 3',3'-c-di-AMP + 2 diphosphate</text>
        <dbReference type="Rhea" id="RHEA:35655"/>
        <dbReference type="ChEBI" id="CHEBI:30616"/>
        <dbReference type="ChEBI" id="CHEBI:33019"/>
        <dbReference type="ChEBI" id="CHEBI:71500"/>
        <dbReference type="EC" id="2.7.7.85"/>
    </reaction>
</comment>
<comment type="cofactor">
    <cofactor evidence="1">
        <name>Mg(2+)</name>
        <dbReference type="ChEBI" id="CHEBI:18420"/>
    </cofactor>
</comment>
<comment type="subunit">
    <text evidence="1">Homooctamer.</text>
</comment>
<comment type="similarity">
    <text evidence="1">Belongs to the DisA family.</text>
</comment>
<gene>
    <name evidence="1" type="primary">disA</name>
    <name type="ordered locus">CKL_0197</name>
</gene>
<name>DISA_CLOK5</name>